<proteinExistence type="inferred from homology"/>
<keyword id="KW-0028">Amino-acid biosynthesis</keyword>
<keyword id="KW-0170">Cobalt</keyword>
<keyword id="KW-0220">Diaminopimelate biosynthesis</keyword>
<keyword id="KW-0378">Hydrolase</keyword>
<keyword id="KW-0457">Lysine biosynthesis</keyword>
<keyword id="KW-0479">Metal-binding</keyword>
<keyword id="KW-0862">Zinc</keyword>
<accession>Q6GF48</accession>
<sequence>MTTFSEKEKIQLLADIVELQTENNNEIDVCNYLKDLFDKYDIKSEILKVNEHRANFVAEIGSGSPILALSGHMDVVDAGNQDNWTYPPFQLTEKDDKLYGRGTTDMKGGLMALVIALIELKEQNQLPQGTIRLLATAGEEKEQEGAKLLADKGYLDDVDGLMIAEPTGSGIYYAHKGSMSCKVTATGKAVHSSVPFIGDNAIDTLLEFYNQFKEKYAELKKNDTKHELDVAPMFKSLIGKDISEEDANYASGLTAVCSIINGGKQFNSVPDEASLEFNVRPVPEYDNDFIESFFQNIINNVDSNKLSLDIPSNHRPVTSDKNSKLITTIKDVASSYVDKDDIFVSALVGATDASSFLGDNKDNVDLAIFGPGNPLMAHQIDEYIEKDMYLKYIDIFKEASIQYLKEK</sequence>
<reference key="1">
    <citation type="journal article" date="2004" name="Proc. Natl. Acad. Sci. U.S.A.">
        <title>Complete genomes of two clinical Staphylococcus aureus strains: evidence for the rapid evolution of virulence and drug resistance.</title>
        <authorList>
            <person name="Holden M.T.G."/>
            <person name="Feil E.J."/>
            <person name="Lindsay J.A."/>
            <person name="Peacock S.J."/>
            <person name="Day N.P.J."/>
            <person name="Enright M.C."/>
            <person name="Foster T.J."/>
            <person name="Moore C.E."/>
            <person name="Hurst L."/>
            <person name="Atkin R."/>
            <person name="Barron A."/>
            <person name="Bason N."/>
            <person name="Bentley S.D."/>
            <person name="Chillingworth C."/>
            <person name="Chillingworth T."/>
            <person name="Churcher C."/>
            <person name="Clark L."/>
            <person name="Corton C."/>
            <person name="Cronin A."/>
            <person name="Doggett J."/>
            <person name="Dowd L."/>
            <person name="Feltwell T."/>
            <person name="Hance Z."/>
            <person name="Harris B."/>
            <person name="Hauser H."/>
            <person name="Holroyd S."/>
            <person name="Jagels K."/>
            <person name="James K.D."/>
            <person name="Lennard N."/>
            <person name="Line A."/>
            <person name="Mayes R."/>
            <person name="Moule S."/>
            <person name="Mungall K."/>
            <person name="Ormond D."/>
            <person name="Quail M.A."/>
            <person name="Rabbinowitsch E."/>
            <person name="Rutherford K.M."/>
            <person name="Sanders M."/>
            <person name="Sharp S."/>
            <person name="Simmonds M."/>
            <person name="Stevens K."/>
            <person name="Whitehead S."/>
            <person name="Barrell B.G."/>
            <person name="Spratt B.G."/>
            <person name="Parkhill J."/>
        </authorList>
    </citation>
    <scope>NUCLEOTIDE SEQUENCE [LARGE SCALE GENOMIC DNA]</scope>
    <source>
        <strain>MRSA252</strain>
    </source>
</reference>
<evidence type="ECO:0000250" key="1"/>
<evidence type="ECO:0000305" key="2"/>
<feature type="chain" id="PRO_0000185266" description="Probable succinyl-diaminopimelate desuccinylase">
    <location>
        <begin position="1"/>
        <end position="407"/>
    </location>
</feature>
<feature type="active site" evidence="1">
    <location>
        <position position="74"/>
    </location>
</feature>
<feature type="active site" description="Proton acceptor" evidence="1">
    <location>
        <position position="139"/>
    </location>
</feature>
<feature type="binding site" evidence="1">
    <location>
        <position position="72"/>
    </location>
    <ligand>
        <name>Zn(2+)</name>
        <dbReference type="ChEBI" id="CHEBI:29105"/>
        <label>1</label>
    </ligand>
</feature>
<feature type="binding site" evidence="1">
    <location>
        <position position="105"/>
    </location>
    <ligand>
        <name>Zn(2+)</name>
        <dbReference type="ChEBI" id="CHEBI:29105"/>
        <label>1</label>
    </ligand>
</feature>
<feature type="binding site" evidence="1">
    <location>
        <position position="105"/>
    </location>
    <ligand>
        <name>Zn(2+)</name>
        <dbReference type="ChEBI" id="CHEBI:29105"/>
        <label>2</label>
    </ligand>
</feature>
<feature type="binding site" evidence="1">
    <location>
        <position position="140"/>
    </location>
    <ligand>
        <name>Zn(2+)</name>
        <dbReference type="ChEBI" id="CHEBI:29105"/>
        <label>2</label>
    </ligand>
</feature>
<feature type="binding site" evidence="1">
    <location>
        <position position="165"/>
    </location>
    <ligand>
        <name>Zn(2+)</name>
        <dbReference type="ChEBI" id="CHEBI:29105"/>
        <label>1</label>
    </ligand>
</feature>
<feature type="binding site" evidence="1">
    <location>
        <position position="378"/>
    </location>
    <ligand>
        <name>Zn(2+)</name>
        <dbReference type="ChEBI" id="CHEBI:29105"/>
        <label>2</label>
    </ligand>
</feature>
<protein>
    <recommendedName>
        <fullName>Probable succinyl-diaminopimelate desuccinylase</fullName>
        <shortName>SDAP desuccinylase</shortName>
        <ecNumber>3.5.1.18</ecNumber>
    </recommendedName>
</protein>
<organism>
    <name type="scientific">Staphylococcus aureus (strain MRSA252)</name>
    <dbReference type="NCBI Taxonomy" id="282458"/>
    <lineage>
        <taxon>Bacteria</taxon>
        <taxon>Bacillati</taxon>
        <taxon>Bacillota</taxon>
        <taxon>Bacilli</taxon>
        <taxon>Bacillales</taxon>
        <taxon>Staphylococcaceae</taxon>
        <taxon>Staphylococcus</taxon>
    </lineage>
</organism>
<gene>
    <name type="primary">dapE</name>
    <name type="ordered locus">SAR2109</name>
</gene>
<name>DAPE_STAAR</name>
<comment type="catalytic activity">
    <reaction>
        <text>N-succinyl-(2S,6S)-2,6-diaminopimelate + H2O = (2S,6S)-2,6-diaminopimelate + succinate</text>
        <dbReference type="Rhea" id="RHEA:22608"/>
        <dbReference type="ChEBI" id="CHEBI:15377"/>
        <dbReference type="ChEBI" id="CHEBI:30031"/>
        <dbReference type="ChEBI" id="CHEBI:57609"/>
        <dbReference type="ChEBI" id="CHEBI:58087"/>
        <dbReference type="EC" id="3.5.1.18"/>
    </reaction>
</comment>
<comment type="cofactor">
    <cofactor evidence="1">
        <name>Zn(2+)</name>
        <dbReference type="ChEBI" id="CHEBI:29105"/>
    </cofactor>
    <cofactor evidence="1">
        <name>Co(2+)</name>
        <dbReference type="ChEBI" id="CHEBI:48828"/>
    </cofactor>
    <text evidence="1">Binds 2 Zn(2+) or Co(2+) ions per subunit.</text>
</comment>
<comment type="pathway">
    <text>Amino-acid biosynthesis; L-lysine biosynthesis via DAP pathway; LL-2,6-diaminopimelate from (S)-tetrahydrodipicolinate (succinylase route): step 3/3.</text>
</comment>
<comment type="similarity">
    <text evidence="2">Belongs to the peptidase M20A family.</text>
</comment>
<dbReference type="EC" id="3.5.1.18"/>
<dbReference type="EMBL" id="BX571856">
    <property type="protein sequence ID" value="CAG41091.1"/>
    <property type="molecule type" value="Genomic_DNA"/>
</dbReference>
<dbReference type="RefSeq" id="WP_000206618.1">
    <property type="nucleotide sequence ID" value="NC_002952.2"/>
</dbReference>
<dbReference type="SMR" id="Q6GF48"/>
<dbReference type="KEGG" id="sar:SAR2109"/>
<dbReference type="HOGENOM" id="CLU_021802_2_2_9"/>
<dbReference type="UniPathway" id="UPA00034">
    <property type="reaction ID" value="UER00021"/>
</dbReference>
<dbReference type="Proteomes" id="UP000000596">
    <property type="component" value="Chromosome"/>
</dbReference>
<dbReference type="GO" id="GO:0046872">
    <property type="term" value="F:metal ion binding"/>
    <property type="evidence" value="ECO:0007669"/>
    <property type="project" value="UniProtKB-KW"/>
</dbReference>
<dbReference type="GO" id="GO:0009014">
    <property type="term" value="F:succinyl-diaminopimelate desuccinylase activity"/>
    <property type="evidence" value="ECO:0007669"/>
    <property type="project" value="UniProtKB-EC"/>
</dbReference>
<dbReference type="GO" id="GO:0019877">
    <property type="term" value="P:diaminopimelate biosynthetic process"/>
    <property type="evidence" value="ECO:0007669"/>
    <property type="project" value="UniProtKB-KW"/>
</dbReference>
<dbReference type="GO" id="GO:0009089">
    <property type="term" value="P:lysine biosynthetic process via diaminopimelate"/>
    <property type="evidence" value="ECO:0007669"/>
    <property type="project" value="UniProtKB-UniPathway"/>
</dbReference>
<dbReference type="CDD" id="cd08659">
    <property type="entry name" value="M20_ArgE_DapE-like"/>
    <property type="match status" value="1"/>
</dbReference>
<dbReference type="Gene3D" id="3.30.70.360">
    <property type="match status" value="1"/>
</dbReference>
<dbReference type="Gene3D" id="3.40.630.10">
    <property type="entry name" value="Zn peptidases"/>
    <property type="match status" value="2"/>
</dbReference>
<dbReference type="InterPro" id="IPR010182">
    <property type="entry name" value="ArgE/DapE"/>
</dbReference>
<dbReference type="InterPro" id="IPR001261">
    <property type="entry name" value="ArgE/DapE_CS"/>
</dbReference>
<dbReference type="InterPro" id="IPR036264">
    <property type="entry name" value="Bact_exopeptidase_dim_dom"/>
</dbReference>
<dbReference type="InterPro" id="IPR002933">
    <property type="entry name" value="Peptidase_M20"/>
</dbReference>
<dbReference type="InterPro" id="IPR011650">
    <property type="entry name" value="Peptidase_M20_dimer"/>
</dbReference>
<dbReference type="InterPro" id="IPR050072">
    <property type="entry name" value="Peptidase_M20A"/>
</dbReference>
<dbReference type="NCBIfam" id="TIGR01910">
    <property type="entry name" value="DapE-ArgE"/>
    <property type="match status" value="1"/>
</dbReference>
<dbReference type="NCBIfam" id="NF006365">
    <property type="entry name" value="PRK08588.1"/>
    <property type="match status" value="1"/>
</dbReference>
<dbReference type="PANTHER" id="PTHR43808">
    <property type="entry name" value="ACETYLORNITHINE DEACETYLASE"/>
    <property type="match status" value="1"/>
</dbReference>
<dbReference type="PANTHER" id="PTHR43808:SF8">
    <property type="entry name" value="PEPTIDASE M20 DIMERISATION DOMAIN-CONTAINING PROTEIN"/>
    <property type="match status" value="1"/>
</dbReference>
<dbReference type="Pfam" id="PF07687">
    <property type="entry name" value="M20_dimer"/>
    <property type="match status" value="1"/>
</dbReference>
<dbReference type="Pfam" id="PF01546">
    <property type="entry name" value="Peptidase_M20"/>
    <property type="match status" value="1"/>
</dbReference>
<dbReference type="SUPFAM" id="SSF55031">
    <property type="entry name" value="Bacterial exopeptidase dimerisation domain"/>
    <property type="match status" value="1"/>
</dbReference>
<dbReference type="SUPFAM" id="SSF53187">
    <property type="entry name" value="Zn-dependent exopeptidases"/>
    <property type="match status" value="1"/>
</dbReference>
<dbReference type="PROSITE" id="PS00758">
    <property type="entry name" value="ARGE_DAPE_CPG2_1"/>
    <property type="match status" value="1"/>
</dbReference>
<dbReference type="PROSITE" id="PS00759">
    <property type="entry name" value="ARGE_DAPE_CPG2_2"/>
    <property type="match status" value="1"/>
</dbReference>